<protein>
    <recommendedName>
        <fullName evidence="1">Endonuclease NucS</fullName>
        <ecNumber evidence="1">3.1.-.-</ecNumber>
    </recommendedName>
</protein>
<name>NUCS_MYCTU</name>
<gene>
    <name evidence="1" type="primary">nucS</name>
    <name type="ordered locus">Rv1321</name>
    <name type="ORF">MTCY130.06</name>
</gene>
<reference key="1">
    <citation type="journal article" date="1998" name="Nature">
        <title>Deciphering the biology of Mycobacterium tuberculosis from the complete genome sequence.</title>
        <authorList>
            <person name="Cole S.T."/>
            <person name="Brosch R."/>
            <person name="Parkhill J."/>
            <person name="Garnier T."/>
            <person name="Churcher C.M."/>
            <person name="Harris D.E."/>
            <person name="Gordon S.V."/>
            <person name="Eiglmeier K."/>
            <person name="Gas S."/>
            <person name="Barry C.E. III"/>
            <person name="Tekaia F."/>
            <person name="Badcock K."/>
            <person name="Basham D."/>
            <person name="Brown D."/>
            <person name="Chillingworth T."/>
            <person name="Connor R."/>
            <person name="Davies R.M."/>
            <person name="Devlin K."/>
            <person name="Feltwell T."/>
            <person name="Gentles S."/>
            <person name="Hamlin N."/>
            <person name="Holroyd S."/>
            <person name="Hornsby T."/>
            <person name="Jagels K."/>
            <person name="Krogh A."/>
            <person name="McLean J."/>
            <person name="Moule S."/>
            <person name="Murphy L.D."/>
            <person name="Oliver S."/>
            <person name="Osborne J."/>
            <person name="Quail M.A."/>
            <person name="Rajandream M.A."/>
            <person name="Rogers J."/>
            <person name="Rutter S."/>
            <person name="Seeger K."/>
            <person name="Skelton S."/>
            <person name="Squares S."/>
            <person name="Squares R."/>
            <person name="Sulston J.E."/>
            <person name="Taylor K."/>
            <person name="Whitehead S."/>
            <person name="Barrell B.G."/>
        </authorList>
    </citation>
    <scope>NUCLEOTIDE SEQUENCE [LARGE SCALE GENOMIC DNA]</scope>
    <source>
        <strain>ATCC 25618 / H37Rv</strain>
    </source>
</reference>
<reference key="2">
    <citation type="journal article" date="2011" name="Mol. Cell. Proteomics">
        <title>Proteogenomic analysis of Mycobacterium tuberculosis by high resolution mass spectrometry.</title>
        <authorList>
            <person name="Kelkar D.S."/>
            <person name="Kumar D."/>
            <person name="Kumar P."/>
            <person name="Balakrishnan L."/>
            <person name="Muthusamy B."/>
            <person name="Yadav A.K."/>
            <person name="Shrivastava P."/>
            <person name="Marimuthu A."/>
            <person name="Anand S."/>
            <person name="Sundaram H."/>
            <person name="Kingsbury R."/>
            <person name="Harsha H.C."/>
            <person name="Nair B."/>
            <person name="Prasad T.S."/>
            <person name="Chauhan D.S."/>
            <person name="Katoch K."/>
            <person name="Katoch V.M."/>
            <person name="Kumar P."/>
            <person name="Chaerkady R."/>
            <person name="Ramachandran S."/>
            <person name="Dash D."/>
            <person name="Pandey A."/>
        </authorList>
    </citation>
    <scope>IDENTIFICATION BY MASS SPECTROMETRY [LARGE SCALE ANALYSIS]</scope>
    <source>
        <strain>ATCC 25618 / H37Rv</strain>
    </source>
</reference>
<keyword id="KW-0963">Cytoplasm</keyword>
<keyword id="KW-0238">DNA-binding</keyword>
<keyword id="KW-0255">Endonuclease</keyword>
<keyword id="KW-0378">Hydrolase</keyword>
<keyword id="KW-0540">Nuclease</keyword>
<keyword id="KW-1185">Reference proteome</keyword>
<comment type="function">
    <text evidence="1">Cleaves both 3' and 5' ssDNA extremities of branched DNA structures.</text>
</comment>
<comment type="subcellular location">
    <subcellularLocation>
        <location evidence="1">Cytoplasm</location>
    </subcellularLocation>
</comment>
<comment type="similarity">
    <text evidence="1">Belongs to the NucS endonuclease family.</text>
</comment>
<accession>P9WIY5</accession>
<accession>L0T9A5</accession>
<accession>Q10634</accession>
<sequence length="226" mass="25094">MSRVRLVIAQCTVDYIGRLTAHLPSARRLLLFKADGSVSVHADDRAYKPLNWMSPPCWLTEESGGQAPVWVVENKAGEQLRITIEGIEHDSSHELGVDPGLVKDGVEAHLQALLAEHIQLLGEGYTLVRREYMTAIGPVDLLCSDERGGSVAVEIKRRGEIDGVEQLTRYLELLNRDSVLAPVKGVFAAQQIKPQARILATDRGIRCLTLDYDTMRGMDSGEYRLF</sequence>
<dbReference type="EC" id="3.1.-.-" evidence="1"/>
<dbReference type="EMBL" id="AL123456">
    <property type="protein sequence ID" value="CCP44078.1"/>
    <property type="molecule type" value="Genomic_DNA"/>
</dbReference>
<dbReference type="PIR" id="E70769">
    <property type="entry name" value="E70769"/>
</dbReference>
<dbReference type="RefSeq" id="NP_215837.1">
    <property type="nucleotide sequence ID" value="NC_000962.3"/>
</dbReference>
<dbReference type="RefSeq" id="WP_010886111.1">
    <property type="nucleotide sequence ID" value="NC_000962.3"/>
</dbReference>
<dbReference type="SMR" id="P9WIY5"/>
<dbReference type="STRING" id="83332.Rv1321"/>
<dbReference type="PaxDb" id="83332-Rv1321"/>
<dbReference type="DNASU" id="886908"/>
<dbReference type="GeneID" id="886908"/>
<dbReference type="KEGG" id="mtu:Rv1321"/>
<dbReference type="KEGG" id="mtv:RVBD_1321"/>
<dbReference type="PATRIC" id="fig|83332.111.peg.1475"/>
<dbReference type="TubercuList" id="Rv1321"/>
<dbReference type="eggNOG" id="COG1637">
    <property type="taxonomic scope" value="Bacteria"/>
</dbReference>
<dbReference type="InParanoid" id="P9WIY5"/>
<dbReference type="OrthoDB" id="3344925at2"/>
<dbReference type="PhylomeDB" id="P9WIY5"/>
<dbReference type="Proteomes" id="UP000001584">
    <property type="component" value="Chromosome"/>
</dbReference>
<dbReference type="GO" id="GO:0005737">
    <property type="term" value="C:cytoplasm"/>
    <property type="evidence" value="ECO:0007669"/>
    <property type="project" value="UniProtKB-SubCell"/>
</dbReference>
<dbReference type="GO" id="GO:0003677">
    <property type="term" value="F:DNA binding"/>
    <property type="evidence" value="ECO:0007669"/>
    <property type="project" value="UniProtKB-KW"/>
</dbReference>
<dbReference type="GO" id="GO:0000014">
    <property type="term" value="F:single-stranded DNA endodeoxyribonuclease activity"/>
    <property type="evidence" value="ECO:0007669"/>
    <property type="project" value="UniProtKB-UniRule"/>
</dbReference>
<dbReference type="CDD" id="cd22341">
    <property type="entry name" value="NucS-like"/>
    <property type="match status" value="1"/>
</dbReference>
<dbReference type="Gene3D" id="2.70.180.20">
    <property type="match status" value="1"/>
</dbReference>
<dbReference type="Gene3D" id="3.40.1350.10">
    <property type="match status" value="1"/>
</dbReference>
<dbReference type="HAMAP" id="MF_00722">
    <property type="entry name" value="NucS"/>
    <property type="match status" value="1"/>
</dbReference>
<dbReference type="InterPro" id="IPR002793">
    <property type="entry name" value="Endonuclease_NucS"/>
</dbReference>
<dbReference type="InterPro" id="IPR048301">
    <property type="entry name" value="NucS_C"/>
</dbReference>
<dbReference type="InterPro" id="IPR048302">
    <property type="entry name" value="NucS_N"/>
</dbReference>
<dbReference type="InterPro" id="IPR049173">
    <property type="entry name" value="NucS_N_sf"/>
</dbReference>
<dbReference type="InterPro" id="IPR011856">
    <property type="entry name" value="tRNA_endonuc-like_dom_sf"/>
</dbReference>
<dbReference type="NCBIfam" id="NF002876">
    <property type="entry name" value="PRK03298.1"/>
    <property type="match status" value="1"/>
</dbReference>
<dbReference type="PANTHER" id="PTHR38814">
    <property type="entry name" value="ENDONUCLEASE NUCS"/>
    <property type="match status" value="1"/>
</dbReference>
<dbReference type="PANTHER" id="PTHR38814:SF1">
    <property type="entry name" value="ENDONUCLEASE NUCS"/>
    <property type="match status" value="1"/>
</dbReference>
<dbReference type="Pfam" id="PF01939">
    <property type="entry name" value="NucS_C"/>
    <property type="match status" value="1"/>
</dbReference>
<dbReference type="Pfam" id="PF21003">
    <property type="entry name" value="NucS_N"/>
    <property type="match status" value="1"/>
</dbReference>
<evidence type="ECO:0000255" key="1">
    <source>
        <dbReference type="HAMAP-Rule" id="MF_00722"/>
    </source>
</evidence>
<organism>
    <name type="scientific">Mycobacterium tuberculosis (strain ATCC 25618 / H37Rv)</name>
    <dbReference type="NCBI Taxonomy" id="83332"/>
    <lineage>
        <taxon>Bacteria</taxon>
        <taxon>Bacillati</taxon>
        <taxon>Actinomycetota</taxon>
        <taxon>Actinomycetes</taxon>
        <taxon>Mycobacteriales</taxon>
        <taxon>Mycobacteriaceae</taxon>
        <taxon>Mycobacterium</taxon>
        <taxon>Mycobacterium tuberculosis complex</taxon>
    </lineage>
</organism>
<feature type="chain" id="PRO_0000155685" description="Endonuclease NucS">
    <location>
        <begin position="1"/>
        <end position="226"/>
    </location>
</feature>
<proteinExistence type="evidence at protein level"/>